<feature type="chain" id="PRO_1000194840" description="Phosphoribosylformylglycinamidine synthase subunit PurQ">
    <location>
        <begin position="1"/>
        <end position="235"/>
    </location>
</feature>
<feature type="domain" description="Glutamine amidotransferase type-1" evidence="1">
    <location>
        <begin position="3"/>
        <end position="234"/>
    </location>
</feature>
<feature type="active site" description="Nucleophile" evidence="1">
    <location>
        <position position="86"/>
    </location>
</feature>
<feature type="active site" evidence="1">
    <location>
        <position position="203"/>
    </location>
</feature>
<feature type="active site" evidence="1">
    <location>
        <position position="205"/>
    </location>
</feature>
<sequence>MKFGVLVFPGSNCDRDVVLVTRDLLKQPTRMVWHQETDISDLDVVVIPGGFSYGDYLRCGAISRFSPAMQATMAHAEQGKLVLGICNGFQVLTESGLLPGALVRNRDLHFICDRVPVRVERTNLPWTQAYQAGQVITLPIAHGEGCYYADPETLKQLQANQQILFRYCQPNGEITPDSNPNGSVENIAGICNRQGNVVGMMPHPERASDPTLGYTDGLLLFQGVLNSLMAQGVTA</sequence>
<accession>B0C7S1</accession>
<organism>
    <name type="scientific">Acaryochloris marina (strain MBIC 11017)</name>
    <dbReference type="NCBI Taxonomy" id="329726"/>
    <lineage>
        <taxon>Bacteria</taxon>
        <taxon>Bacillati</taxon>
        <taxon>Cyanobacteriota</taxon>
        <taxon>Cyanophyceae</taxon>
        <taxon>Acaryochloridales</taxon>
        <taxon>Acaryochloridaceae</taxon>
        <taxon>Acaryochloris</taxon>
    </lineage>
</organism>
<name>PURQ_ACAM1</name>
<gene>
    <name evidence="1" type="primary">purQ</name>
    <name type="ordered locus">AM1_1434</name>
</gene>
<proteinExistence type="inferred from homology"/>
<dbReference type="EC" id="6.3.5.3" evidence="1"/>
<dbReference type="EC" id="3.5.1.2" evidence="1"/>
<dbReference type="EMBL" id="CP000828">
    <property type="protein sequence ID" value="ABW26462.1"/>
    <property type="molecule type" value="Genomic_DNA"/>
</dbReference>
<dbReference type="RefSeq" id="WP_012161993.1">
    <property type="nucleotide sequence ID" value="NC_009925.1"/>
</dbReference>
<dbReference type="SMR" id="B0C7S1"/>
<dbReference type="STRING" id="329726.AM1_1434"/>
<dbReference type="KEGG" id="amr:AM1_1434"/>
<dbReference type="eggNOG" id="COG0047">
    <property type="taxonomic scope" value="Bacteria"/>
</dbReference>
<dbReference type="HOGENOM" id="CLU_001031_3_1_3"/>
<dbReference type="OrthoDB" id="9804441at2"/>
<dbReference type="UniPathway" id="UPA00074">
    <property type="reaction ID" value="UER00128"/>
</dbReference>
<dbReference type="Proteomes" id="UP000000268">
    <property type="component" value="Chromosome"/>
</dbReference>
<dbReference type="GO" id="GO:0005737">
    <property type="term" value="C:cytoplasm"/>
    <property type="evidence" value="ECO:0007669"/>
    <property type="project" value="UniProtKB-SubCell"/>
</dbReference>
<dbReference type="GO" id="GO:0005524">
    <property type="term" value="F:ATP binding"/>
    <property type="evidence" value="ECO:0007669"/>
    <property type="project" value="UniProtKB-KW"/>
</dbReference>
<dbReference type="GO" id="GO:0004359">
    <property type="term" value="F:glutaminase activity"/>
    <property type="evidence" value="ECO:0007669"/>
    <property type="project" value="UniProtKB-EC"/>
</dbReference>
<dbReference type="GO" id="GO:0004642">
    <property type="term" value="F:phosphoribosylformylglycinamidine synthase activity"/>
    <property type="evidence" value="ECO:0007669"/>
    <property type="project" value="UniProtKB-UniRule"/>
</dbReference>
<dbReference type="GO" id="GO:0006189">
    <property type="term" value="P:'de novo' IMP biosynthetic process"/>
    <property type="evidence" value="ECO:0007669"/>
    <property type="project" value="UniProtKB-UniRule"/>
</dbReference>
<dbReference type="CDD" id="cd01740">
    <property type="entry name" value="GATase1_FGAR_AT"/>
    <property type="match status" value="1"/>
</dbReference>
<dbReference type="Gene3D" id="3.40.50.880">
    <property type="match status" value="1"/>
</dbReference>
<dbReference type="HAMAP" id="MF_00421">
    <property type="entry name" value="PurQ"/>
    <property type="match status" value="1"/>
</dbReference>
<dbReference type="InterPro" id="IPR029062">
    <property type="entry name" value="Class_I_gatase-like"/>
</dbReference>
<dbReference type="InterPro" id="IPR010075">
    <property type="entry name" value="PRibForGlyAmidine_synth_PurQ"/>
</dbReference>
<dbReference type="NCBIfam" id="TIGR01737">
    <property type="entry name" value="FGAM_synth_I"/>
    <property type="match status" value="1"/>
</dbReference>
<dbReference type="NCBIfam" id="NF002957">
    <property type="entry name" value="PRK03619.1"/>
    <property type="match status" value="1"/>
</dbReference>
<dbReference type="PANTHER" id="PTHR47552">
    <property type="entry name" value="PHOSPHORIBOSYLFORMYLGLYCINAMIDINE SYNTHASE SUBUNIT PURQ"/>
    <property type="match status" value="1"/>
</dbReference>
<dbReference type="PANTHER" id="PTHR47552:SF1">
    <property type="entry name" value="PHOSPHORIBOSYLFORMYLGLYCINAMIDINE SYNTHASE SUBUNIT PURQ"/>
    <property type="match status" value="1"/>
</dbReference>
<dbReference type="Pfam" id="PF13507">
    <property type="entry name" value="GATase_5"/>
    <property type="match status" value="1"/>
</dbReference>
<dbReference type="PIRSF" id="PIRSF001586">
    <property type="entry name" value="FGAM_synth_I"/>
    <property type="match status" value="1"/>
</dbReference>
<dbReference type="SMART" id="SM01211">
    <property type="entry name" value="GATase_5"/>
    <property type="match status" value="1"/>
</dbReference>
<dbReference type="SUPFAM" id="SSF52317">
    <property type="entry name" value="Class I glutamine amidotransferase-like"/>
    <property type="match status" value="1"/>
</dbReference>
<dbReference type="PROSITE" id="PS51273">
    <property type="entry name" value="GATASE_TYPE_1"/>
    <property type="match status" value="1"/>
</dbReference>
<protein>
    <recommendedName>
        <fullName evidence="1">Phosphoribosylformylglycinamidine synthase subunit PurQ</fullName>
        <shortName evidence="1">FGAM synthase</shortName>
        <ecNumber evidence="1">6.3.5.3</ecNumber>
    </recommendedName>
    <alternativeName>
        <fullName evidence="1">Formylglycinamide ribonucleotide amidotransferase subunit I</fullName>
        <shortName evidence="1">FGAR amidotransferase I</shortName>
        <shortName evidence="1">FGAR-AT I</shortName>
    </alternativeName>
    <alternativeName>
        <fullName evidence="1">Glutaminase PurQ</fullName>
        <ecNumber evidence="1">3.5.1.2</ecNumber>
    </alternativeName>
    <alternativeName>
        <fullName evidence="1">Phosphoribosylformylglycinamidine synthase subunit I</fullName>
    </alternativeName>
</protein>
<reference key="1">
    <citation type="journal article" date="2008" name="Proc. Natl. Acad. Sci. U.S.A.">
        <title>Niche adaptation and genome expansion in the chlorophyll d-producing cyanobacterium Acaryochloris marina.</title>
        <authorList>
            <person name="Swingley W.D."/>
            <person name="Chen M."/>
            <person name="Cheung P.C."/>
            <person name="Conrad A.L."/>
            <person name="Dejesa L.C."/>
            <person name="Hao J."/>
            <person name="Honchak B.M."/>
            <person name="Karbach L.E."/>
            <person name="Kurdoglu A."/>
            <person name="Lahiri S."/>
            <person name="Mastrian S.D."/>
            <person name="Miyashita H."/>
            <person name="Page L."/>
            <person name="Ramakrishna P."/>
            <person name="Satoh S."/>
            <person name="Sattley W.M."/>
            <person name="Shimada Y."/>
            <person name="Taylor H.L."/>
            <person name="Tomo T."/>
            <person name="Tsuchiya T."/>
            <person name="Wang Z.T."/>
            <person name="Raymond J."/>
            <person name="Mimuro M."/>
            <person name="Blankenship R.E."/>
            <person name="Touchman J.W."/>
        </authorList>
    </citation>
    <scope>NUCLEOTIDE SEQUENCE [LARGE SCALE GENOMIC DNA]</scope>
    <source>
        <strain>MBIC 11017</strain>
    </source>
</reference>
<comment type="function">
    <text evidence="1">Part of the phosphoribosylformylglycinamidine synthase complex involved in the purines biosynthetic pathway. Catalyzes the ATP-dependent conversion of formylglycinamide ribonucleotide (FGAR) and glutamine to yield formylglycinamidine ribonucleotide (FGAM) and glutamate. The FGAM synthase complex is composed of three subunits. PurQ produces an ammonia molecule by converting glutamine to glutamate. PurL transfers the ammonia molecule to FGAR to form FGAM in an ATP-dependent manner. PurS interacts with PurQ and PurL and is thought to assist in the transfer of the ammonia molecule from PurQ to PurL.</text>
</comment>
<comment type="catalytic activity">
    <reaction evidence="1">
        <text>N(2)-formyl-N(1)-(5-phospho-beta-D-ribosyl)glycinamide + L-glutamine + ATP + H2O = 2-formamido-N(1)-(5-O-phospho-beta-D-ribosyl)acetamidine + L-glutamate + ADP + phosphate + H(+)</text>
        <dbReference type="Rhea" id="RHEA:17129"/>
        <dbReference type="ChEBI" id="CHEBI:15377"/>
        <dbReference type="ChEBI" id="CHEBI:15378"/>
        <dbReference type="ChEBI" id="CHEBI:29985"/>
        <dbReference type="ChEBI" id="CHEBI:30616"/>
        <dbReference type="ChEBI" id="CHEBI:43474"/>
        <dbReference type="ChEBI" id="CHEBI:58359"/>
        <dbReference type="ChEBI" id="CHEBI:147286"/>
        <dbReference type="ChEBI" id="CHEBI:147287"/>
        <dbReference type="ChEBI" id="CHEBI:456216"/>
        <dbReference type="EC" id="6.3.5.3"/>
    </reaction>
</comment>
<comment type="catalytic activity">
    <reaction evidence="1">
        <text>L-glutamine + H2O = L-glutamate + NH4(+)</text>
        <dbReference type="Rhea" id="RHEA:15889"/>
        <dbReference type="ChEBI" id="CHEBI:15377"/>
        <dbReference type="ChEBI" id="CHEBI:28938"/>
        <dbReference type="ChEBI" id="CHEBI:29985"/>
        <dbReference type="ChEBI" id="CHEBI:58359"/>
        <dbReference type="EC" id="3.5.1.2"/>
    </reaction>
</comment>
<comment type="pathway">
    <text evidence="1">Purine metabolism; IMP biosynthesis via de novo pathway; 5-amino-1-(5-phospho-D-ribosyl)imidazole from N(2)-formyl-N(1)-(5-phospho-D-ribosyl)glycinamide: step 1/2.</text>
</comment>
<comment type="subunit">
    <text evidence="1">Part of the FGAM synthase complex composed of 1 PurL, 1 PurQ and 2 PurS subunits.</text>
</comment>
<comment type="subcellular location">
    <subcellularLocation>
        <location evidence="1">Cytoplasm</location>
    </subcellularLocation>
</comment>
<evidence type="ECO:0000255" key="1">
    <source>
        <dbReference type="HAMAP-Rule" id="MF_00421"/>
    </source>
</evidence>
<keyword id="KW-0067">ATP-binding</keyword>
<keyword id="KW-0963">Cytoplasm</keyword>
<keyword id="KW-0315">Glutamine amidotransferase</keyword>
<keyword id="KW-0378">Hydrolase</keyword>
<keyword id="KW-0436">Ligase</keyword>
<keyword id="KW-0547">Nucleotide-binding</keyword>
<keyword id="KW-0658">Purine biosynthesis</keyword>
<keyword id="KW-1185">Reference proteome</keyword>